<protein>
    <recommendedName>
        <fullName evidence="1">Ribosome-binding factor A</fullName>
    </recommendedName>
</protein>
<organism>
    <name type="scientific">Lactobacillus gasseri (strain ATCC 33323 / DSM 20243 / BCRC 14619 / CIP 102991 / JCM 1131 / KCTC 3163 / NCIMB 11718 / NCTC 13722 / AM63)</name>
    <dbReference type="NCBI Taxonomy" id="324831"/>
    <lineage>
        <taxon>Bacteria</taxon>
        <taxon>Bacillati</taxon>
        <taxon>Bacillota</taxon>
        <taxon>Bacilli</taxon>
        <taxon>Lactobacillales</taxon>
        <taxon>Lactobacillaceae</taxon>
        <taxon>Lactobacillus</taxon>
    </lineage>
</organism>
<feature type="chain" id="PRO_1000000127" description="Ribosome-binding factor A">
    <location>
        <begin position="1"/>
        <end position="123"/>
    </location>
</feature>
<keyword id="KW-0963">Cytoplasm</keyword>
<keyword id="KW-0690">Ribosome biogenesis</keyword>
<comment type="function">
    <text evidence="1">One of several proteins that assist in the late maturation steps of the functional core of the 30S ribosomal subunit. Associates with free 30S ribosomal subunits (but not with 30S subunits that are part of 70S ribosomes or polysomes). Required for efficient processing of 16S rRNA. May interact with the 5'-terminal helix region of 16S rRNA.</text>
</comment>
<comment type="subunit">
    <text evidence="1">Monomer. Binds 30S ribosomal subunits, but not 50S ribosomal subunits or 70S ribosomes.</text>
</comment>
<comment type="subcellular location">
    <subcellularLocation>
        <location evidence="1">Cytoplasm</location>
    </subcellularLocation>
</comment>
<comment type="similarity">
    <text evidence="1">Belongs to the RbfA family.</text>
</comment>
<dbReference type="EMBL" id="CP000413">
    <property type="protein sequence ID" value="ABJ60206.1"/>
    <property type="molecule type" value="Genomic_DNA"/>
</dbReference>
<dbReference type="RefSeq" id="WP_003647478.1">
    <property type="nucleotide sequence ID" value="NZ_WBMG01000005.1"/>
</dbReference>
<dbReference type="SMR" id="Q044B6"/>
<dbReference type="KEGG" id="lga:LGAS_0815"/>
<dbReference type="HOGENOM" id="CLU_089475_3_0_9"/>
<dbReference type="BioCyc" id="LGAS324831:G1G6Y-809-MONOMER"/>
<dbReference type="Proteomes" id="UP000000664">
    <property type="component" value="Chromosome"/>
</dbReference>
<dbReference type="GO" id="GO:0005829">
    <property type="term" value="C:cytosol"/>
    <property type="evidence" value="ECO:0007669"/>
    <property type="project" value="TreeGrafter"/>
</dbReference>
<dbReference type="GO" id="GO:0043024">
    <property type="term" value="F:ribosomal small subunit binding"/>
    <property type="evidence" value="ECO:0007669"/>
    <property type="project" value="TreeGrafter"/>
</dbReference>
<dbReference type="GO" id="GO:0030490">
    <property type="term" value="P:maturation of SSU-rRNA"/>
    <property type="evidence" value="ECO:0007669"/>
    <property type="project" value="UniProtKB-UniRule"/>
</dbReference>
<dbReference type="Gene3D" id="3.30.300.20">
    <property type="match status" value="1"/>
</dbReference>
<dbReference type="HAMAP" id="MF_00003">
    <property type="entry name" value="RbfA"/>
    <property type="match status" value="1"/>
</dbReference>
<dbReference type="InterPro" id="IPR015946">
    <property type="entry name" value="KH_dom-like_a/b"/>
</dbReference>
<dbReference type="InterPro" id="IPR000238">
    <property type="entry name" value="RbfA"/>
</dbReference>
<dbReference type="InterPro" id="IPR023799">
    <property type="entry name" value="RbfA_dom_sf"/>
</dbReference>
<dbReference type="InterPro" id="IPR020053">
    <property type="entry name" value="Ribosome-bd_factorA_CS"/>
</dbReference>
<dbReference type="NCBIfam" id="NF010391">
    <property type="entry name" value="PRK13818.1"/>
    <property type="match status" value="1"/>
</dbReference>
<dbReference type="NCBIfam" id="TIGR00082">
    <property type="entry name" value="rbfA"/>
    <property type="match status" value="1"/>
</dbReference>
<dbReference type="PANTHER" id="PTHR33515">
    <property type="entry name" value="RIBOSOME-BINDING FACTOR A, CHLOROPLASTIC-RELATED"/>
    <property type="match status" value="1"/>
</dbReference>
<dbReference type="PANTHER" id="PTHR33515:SF1">
    <property type="entry name" value="RIBOSOME-BINDING FACTOR A, CHLOROPLASTIC-RELATED"/>
    <property type="match status" value="1"/>
</dbReference>
<dbReference type="Pfam" id="PF02033">
    <property type="entry name" value="RBFA"/>
    <property type="match status" value="1"/>
</dbReference>
<dbReference type="SUPFAM" id="SSF89919">
    <property type="entry name" value="Ribosome-binding factor A, RbfA"/>
    <property type="match status" value="1"/>
</dbReference>
<dbReference type="PROSITE" id="PS01319">
    <property type="entry name" value="RBFA"/>
    <property type="match status" value="1"/>
</dbReference>
<accession>Q044B6</accession>
<proteinExistence type="inferred from homology"/>
<sequence length="123" mass="14193">MKHRIGRVEGEILRELTKILRKDIRDPRLSDITITAVECTNDLSYATIYYSLLTEDPAKEKEVAEGLDKAKGMMRHLLGQTLTVYKVPELIFKRDTSVAYGSKIDNLINQVKKQDQERENKNK</sequence>
<evidence type="ECO:0000255" key="1">
    <source>
        <dbReference type="HAMAP-Rule" id="MF_00003"/>
    </source>
</evidence>
<reference key="1">
    <citation type="journal article" date="2006" name="Proc. Natl. Acad. Sci. U.S.A.">
        <title>Comparative genomics of the lactic acid bacteria.</title>
        <authorList>
            <person name="Makarova K.S."/>
            <person name="Slesarev A."/>
            <person name="Wolf Y.I."/>
            <person name="Sorokin A."/>
            <person name="Mirkin B."/>
            <person name="Koonin E.V."/>
            <person name="Pavlov A."/>
            <person name="Pavlova N."/>
            <person name="Karamychev V."/>
            <person name="Polouchine N."/>
            <person name="Shakhova V."/>
            <person name="Grigoriev I."/>
            <person name="Lou Y."/>
            <person name="Rohksar D."/>
            <person name="Lucas S."/>
            <person name="Huang K."/>
            <person name="Goodstein D.M."/>
            <person name="Hawkins T."/>
            <person name="Plengvidhya V."/>
            <person name="Welker D."/>
            <person name="Hughes J."/>
            <person name="Goh Y."/>
            <person name="Benson A."/>
            <person name="Baldwin K."/>
            <person name="Lee J.-H."/>
            <person name="Diaz-Muniz I."/>
            <person name="Dosti B."/>
            <person name="Smeianov V."/>
            <person name="Wechter W."/>
            <person name="Barabote R."/>
            <person name="Lorca G."/>
            <person name="Altermann E."/>
            <person name="Barrangou R."/>
            <person name="Ganesan B."/>
            <person name="Xie Y."/>
            <person name="Rawsthorne H."/>
            <person name="Tamir D."/>
            <person name="Parker C."/>
            <person name="Breidt F."/>
            <person name="Broadbent J.R."/>
            <person name="Hutkins R."/>
            <person name="O'Sullivan D."/>
            <person name="Steele J."/>
            <person name="Unlu G."/>
            <person name="Saier M.H. Jr."/>
            <person name="Klaenhammer T."/>
            <person name="Richardson P."/>
            <person name="Kozyavkin S."/>
            <person name="Weimer B.C."/>
            <person name="Mills D.A."/>
        </authorList>
    </citation>
    <scope>NUCLEOTIDE SEQUENCE [LARGE SCALE GENOMIC DNA]</scope>
    <source>
        <strain>ATCC 33323 / DSM 20243 / BCRC 14619 / CIP 102991 / JCM 1131 / KCTC 3163 / NCIMB 11718 / NCTC 13722 / AM63</strain>
    </source>
</reference>
<gene>
    <name evidence="1" type="primary">rbfA</name>
    <name type="ordered locus">LGAS_0815</name>
</gene>
<name>RBFA_LACGA</name>